<evidence type="ECO:0000256" key="1">
    <source>
        <dbReference type="SAM" id="MobiDB-lite"/>
    </source>
</evidence>
<evidence type="ECO:0000305" key="2"/>
<name>ZMAT1_XENTR</name>
<keyword id="KW-0238">DNA-binding</keyword>
<keyword id="KW-0479">Metal-binding</keyword>
<keyword id="KW-0539">Nucleus</keyword>
<keyword id="KW-1185">Reference proteome</keyword>
<keyword id="KW-0677">Repeat</keyword>
<keyword id="KW-0862">Zinc</keyword>
<keyword id="KW-0863">Zinc-finger</keyword>
<sequence length="553" mass="62685">MAAESAIIPQLAESITPSSPAATCSGPMAGGDTSSNAHTSIPCQQDIVLDEQTKRELFTDTFCKVCNAVLQFESHRISHYEGKKHAQKVRLYFLKNELEEMALKTQRTDRVEFHVDGEVAQGKHKFCGLCNMVFSSPVVAQTHYVGKVHAKKMRQLAGEQVEWTPQTDQDFAAAAATSPVDSQTEIADSPAVEPTCDRRCEQEGSAEQQSCPDYEIDLNDPNKYCKLCCASFNKALVAQQHYSGKKHARNQARKKMMEEMEGTGVADSEVSDGRYVCPICNITLTSIEMYQSHMQGNKHQIKESMVANLMKTSKKNYDSFQDELADYIKVQKARGLVPKTQFRQEKDQYDSCDYEEEEEQEPEPGLLHGHINSKTNAPYKYLDRHPVPYPAHNPSHPTDQRVPPWAAHWEQASRPPKGHHLDLHKAKHISRSPTSQDSSDNSSGSSSDESSGSYKKDKRRKRKHHRESRLRGSGRIRRGDENSEKRKRKGEDADSGKEDNKHDRGKTSGGDKDKHRREKKKKEEQSKKHKKLKKEGEQRTEEEMLWDESILGF</sequence>
<protein>
    <recommendedName>
        <fullName>Zinc finger matrin-type protein 1</fullName>
    </recommendedName>
</protein>
<dbReference type="EMBL" id="CR760435">
    <property type="protein sequence ID" value="CAJ82830.1"/>
    <property type="status" value="ALT_INIT"/>
    <property type="molecule type" value="mRNA"/>
</dbReference>
<dbReference type="EMBL" id="CR848257">
    <property type="protein sequence ID" value="CAJ83165.1"/>
    <property type="molecule type" value="mRNA"/>
</dbReference>
<dbReference type="RefSeq" id="NP_001039040.1">
    <property type="nucleotide sequence ID" value="NM_001045575.1"/>
</dbReference>
<dbReference type="SMR" id="Q28EG9"/>
<dbReference type="STRING" id="8364.ENSXETP00000038307"/>
<dbReference type="PaxDb" id="8364-ENSXETP00000004149"/>
<dbReference type="GeneID" id="733809"/>
<dbReference type="KEGG" id="xtr:733809"/>
<dbReference type="AGR" id="Xenbase:XB-GENE-1016025"/>
<dbReference type="CTD" id="51315"/>
<dbReference type="Xenbase" id="XB-GENE-1016025">
    <property type="gene designation" value="krcc1"/>
</dbReference>
<dbReference type="eggNOG" id="ENOG502QVFE">
    <property type="taxonomic scope" value="Eukaryota"/>
</dbReference>
<dbReference type="HOGENOM" id="CLU_037023_0_0_1"/>
<dbReference type="InParanoid" id="Q28EG9"/>
<dbReference type="OrthoDB" id="1925236at2759"/>
<dbReference type="Proteomes" id="UP000008143">
    <property type="component" value="Chromosome 1"/>
</dbReference>
<dbReference type="Bgee" id="ENSXETG00000001949">
    <property type="expression patterns" value="Expressed in 4-cell stage embryo and 12 other cell types or tissues"/>
</dbReference>
<dbReference type="GO" id="GO:0005634">
    <property type="term" value="C:nucleus"/>
    <property type="evidence" value="ECO:0007669"/>
    <property type="project" value="UniProtKB-SubCell"/>
</dbReference>
<dbReference type="GO" id="GO:0003677">
    <property type="term" value="F:DNA binding"/>
    <property type="evidence" value="ECO:0007669"/>
    <property type="project" value="UniProtKB-KW"/>
</dbReference>
<dbReference type="GO" id="GO:0008270">
    <property type="term" value="F:zinc ion binding"/>
    <property type="evidence" value="ECO:0007669"/>
    <property type="project" value="UniProtKB-KW"/>
</dbReference>
<dbReference type="Gene3D" id="3.30.160.60">
    <property type="entry name" value="Classic Zinc Finger"/>
    <property type="match status" value="4"/>
</dbReference>
<dbReference type="InterPro" id="IPR003604">
    <property type="entry name" value="Matrin/U1-like-C_Znf_C2H2"/>
</dbReference>
<dbReference type="InterPro" id="IPR036236">
    <property type="entry name" value="Znf_C2H2_sf"/>
</dbReference>
<dbReference type="InterPro" id="IPR013087">
    <property type="entry name" value="Znf_C2H2_type"/>
</dbReference>
<dbReference type="PANTHER" id="PTHR46742">
    <property type="entry name" value="LYSINE-RICH COILED-COIL PROTEIN 1"/>
    <property type="match status" value="1"/>
</dbReference>
<dbReference type="PANTHER" id="PTHR46742:SF2">
    <property type="entry name" value="ZINC FINGER MATRIN-TYPE PROTEIN 1"/>
    <property type="match status" value="1"/>
</dbReference>
<dbReference type="Pfam" id="PF12874">
    <property type="entry name" value="zf-met"/>
    <property type="match status" value="4"/>
</dbReference>
<dbReference type="SMART" id="SM00355">
    <property type="entry name" value="ZnF_C2H2"/>
    <property type="match status" value="4"/>
</dbReference>
<dbReference type="SMART" id="SM00451">
    <property type="entry name" value="ZnF_U1"/>
    <property type="match status" value="4"/>
</dbReference>
<dbReference type="SUPFAM" id="SSF57667">
    <property type="entry name" value="beta-beta-alpha zinc fingers"/>
    <property type="match status" value="4"/>
</dbReference>
<gene>
    <name type="primary">zmat1</name>
    <name type="ORF">TNeu105p20.1</name>
    <name type="ORF">TTpA018g05.1</name>
</gene>
<feature type="chain" id="PRO_0000311350" description="Zinc finger matrin-type protein 1">
    <location>
        <begin position="1"/>
        <end position="553"/>
    </location>
</feature>
<feature type="zinc finger region" description="Matrin-type 1">
    <location>
        <begin position="61"/>
        <end position="91"/>
    </location>
</feature>
<feature type="zinc finger region" description="Matrin-type 2">
    <location>
        <begin position="125"/>
        <end position="155"/>
    </location>
</feature>
<feature type="zinc finger region" description="Matrin-type 3">
    <location>
        <begin position="223"/>
        <end position="253"/>
    </location>
</feature>
<feature type="zinc finger region" description="Matrin-type 4">
    <location>
        <begin position="275"/>
        <end position="305"/>
    </location>
</feature>
<feature type="region of interest" description="Disordered" evidence="1">
    <location>
        <begin position="16"/>
        <end position="36"/>
    </location>
</feature>
<feature type="region of interest" description="Disordered" evidence="1">
    <location>
        <begin position="341"/>
        <end position="402"/>
    </location>
</feature>
<feature type="region of interest" description="Disordered" evidence="1">
    <location>
        <begin position="428"/>
        <end position="553"/>
    </location>
</feature>
<feature type="compositionally biased region" description="Acidic residues" evidence="1">
    <location>
        <begin position="350"/>
        <end position="362"/>
    </location>
</feature>
<feature type="compositionally biased region" description="Low complexity" evidence="1">
    <location>
        <begin position="431"/>
        <end position="453"/>
    </location>
</feature>
<feature type="compositionally biased region" description="Basic residues" evidence="1">
    <location>
        <begin position="456"/>
        <end position="476"/>
    </location>
</feature>
<feature type="compositionally biased region" description="Basic and acidic residues" evidence="1">
    <location>
        <begin position="477"/>
        <end position="513"/>
    </location>
</feature>
<comment type="subcellular location">
    <subcellularLocation>
        <location evidence="2">Nucleus</location>
    </subcellularLocation>
</comment>
<comment type="sequence caution" evidence="2">
    <conflict type="erroneous initiation">
        <sequence resource="EMBL-CDS" id="CAJ82830"/>
    </conflict>
</comment>
<reference key="1">
    <citation type="submission" date="2006-10" db="EMBL/GenBank/DDBJ databases">
        <authorList>
            <consortium name="Sanger Xenopus tropicalis EST/cDNA project"/>
        </authorList>
    </citation>
    <scope>NUCLEOTIDE SEQUENCE [LARGE SCALE MRNA]</scope>
    <source>
        <tissue>Neurula</tissue>
        <tissue>Tadpole</tissue>
    </source>
</reference>
<proteinExistence type="evidence at transcript level"/>
<accession>Q28EG9</accession>
<accession>Q28IF3</accession>
<organism>
    <name type="scientific">Xenopus tropicalis</name>
    <name type="common">Western clawed frog</name>
    <name type="synonym">Silurana tropicalis</name>
    <dbReference type="NCBI Taxonomy" id="8364"/>
    <lineage>
        <taxon>Eukaryota</taxon>
        <taxon>Metazoa</taxon>
        <taxon>Chordata</taxon>
        <taxon>Craniata</taxon>
        <taxon>Vertebrata</taxon>
        <taxon>Euteleostomi</taxon>
        <taxon>Amphibia</taxon>
        <taxon>Batrachia</taxon>
        <taxon>Anura</taxon>
        <taxon>Pipoidea</taxon>
        <taxon>Pipidae</taxon>
        <taxon>Xenopodinae</taxon>
        <taxon>Xenopus</taxon>
        <taxon>Silurana</taxon>
    </lineage>
</organism>